<organism>
    <name type="scientific">Xenopus tropicalis</name>
    <name type="common">Western clawed frog</name>
    <name type="synonym">Silurana tropicalis</name>
    <dbReference type="NCBI Taxonomy" id="8364"/>
    <lineage>
        <taxon>Eukaryota</taxon>
        <taxon>Metazoa</taxon>
        <taxon>Chordata</taxon>
        <taxon>Craniata</taxon>
        <taxon>Vertebrata</taxon>
        <taxon>Euteleostomi</taxon>
        <taxon>Amphibia</taxon>
        <taxon>Batrachia</taxon>
        <taxon>Anura</taxon>
        <taxon>Pipoidea</taxon>
        <taxon>Pipidae</taxon>
        <taxon>Xenopodinae</taxon>
        <taxon>Xenopus</taxon>
        <taxon>Silurana</taxon>
    </lineage>
</organism>
<feature type="chain" id="PRO_0000415841" description="Transmembrane protein 231">
    <location>
        <begin position="1"/>
        <end position="312"/>
    </location>
</feature>
<feature type="transmembrane region" description="Helical" evidence="2">
    <location>
        <begin position="23"/>
        <end position="43"/>
    </location>
</feature>
<feature type="transmembrane region" description="Helical" evidence="2">
    <location>
        <begin position="263"/>
        <end position="283"/>
    </location>
</feature>
<feature type="glycosylation site" description="N-linked (GlcNAc...) asparagine" evidence="2">
    <location>
        <position position="193"/>
    </location>
</feature>
<feature type="glycosylation site" description="N-linked (GlcNAc...) asparagine" evidence="2">
    <location>
        <position position="220"/>
    </location>
</feature>
<feature type="sequence conflict" description="In Ref. 2; AAI58963." evidence="3" ref="2">
    <original>S</original>
    <variation>P</variation>
    <location>
        <position position="300"/>
    </location>
</feature>
<reference key="1">
    <citation type="journal article" date="2010" name="Science">
        <title>The genome of the Western clawed frog Xenopus tropicalis.</title>
        <authorList>
            <person name="Hellsten U."/>
            <person name="Harland R.M."/>
            <person name="Gilchrist M.J."/>
            <person name="Hendrix D."/>
            <person name="Jurka J."/>
            <person name="Kapitonov V."/>
            <person name="Ovcharenko I."/>
            <person name="Putnam N.H."/>
            <person name="Shu S."/>
            <person name="Taher L."/>
            <person name="Blitz I.L."/>
            <person name="Blumberg B."/>
            <person name="Dichmann D.S."/>
            <person name="Dubchak I."/>
            <person name="Amaya E."/>
            <person name="Detter J.C."/>
            <person name="Fletcher R."/>
            <person name="Gerhard D.S."/>
            <person name="Goodstein D."/>
            <person name="Graves T."/>
            <person name="Grigoriev I.V."/>
            <person name="Grimwood J."/>
            <person name="Kawashima T."/>
            <person name="Lindquist E."/>
            <person name="Lucas S.M."/>
            <person name="Mead P.E."/>
            <person name="Mitros T."/>
            <person name="Ogino H."/>
            <person name="Ohta Y."/>
            <person name="Poliakov A.V."/>
            <person name="Pollet N."/>
            <person name="Robert J."/>
            <person name="Salamov A."/>
            <person name="Sater A.K."/>
            <person name="Schmutz J."/>
            <person name="Terry A."/>
            <person name="Vize P.D."/>
            <person name="Warren W.C."/>
            <person name="Wells D."/>
            <person name="Wills A."/>
            <person name="Wilson R.K."/>
            <person name="Zimmerman L.B."/>
            <person name="Zorn A.M."/>
            <person name="Grainger R."/>
            <person name="Grammer T."/>
            <person name="Khokha M.K."/>
            <person name="Richardson P.M."/>
            <person name="Rokhsar D.S."/>
        </authorList>
    </citation>
    <scope>NUCLEOTIDE SEQUENCE [LARGE SCALE GENOMIC DNA]</scope>
</reference>
<reference key="2">
    <citation type="submission" date="2008-02" db="EMBL/GenBank/DDBJ databases">
        <authorList>
            <consortium name="NIH - Xenopus Gene Collection (XGC) project"/>
        </authorList>
    </citation>
    <scope>NUCLEOTIDE SEQUENCE [LARGE SCALE MRNA]</scope>
    <source>
        <tissue>Embryo</tissue>
    </source>
</reference>
<name>TM231_XENTR</name>
<sequence length="312" mass="35820">MALYEVYSHPALLRYRSSICSKATLFILIVLLLTYIPPLLVAFRSYGFWLKTSTYEEQPNVRFQYDVLLIALSSTTGNYLAWSTYPGFNNLVGDKLRLPHISAREEDRNQDGKMDLLNFQLELPLQPTDNIYGVQLILTFSYQLSKMSTFIMQSMALIQYSSPIPGSQLYMNGDLKLQQRQPLNHRGLDTTYNVSVINRSSPFASTYALTNIISSYQERNVTTVLNAPNPLWIVGRAASDPFVIKAVIRYPVESISYVPGFWEMLKYAWIQYVSILLIFLWVFERIKIFVFQNQVLTTVSGPIPSLYKSHQS</sequence>
<proteinExistence type="evidence at transcript level"/>
<gene>
    <name type="primary">tmem231</name>
</gene>
<evidence type="ECO:0000250" key="1"/>
<evidence type="ECO:0000255" key="2"/>
<evidence type="ECO:0000305" key="3"/>
<accession>F7B645</accession>
<accession>B0JYY1</accession>
<accession>F6QSJ2</accession>
<keyword id="KW-1003">Cell membrane</keyword>
<keyword id="KW-0966">Cell projection</keyword>
<keyword id="KW-0969">Cilium</keyword>
<keyword id="KW-0970">Cilium biogenesis/degradation</keyword>
<keyword id="KW-0325">Glycoprotein</keyword>
<keyword id="KW-0472">Membrane</keyword>
<keyword id="KW-1185">Reference proteome</keyword>
<keyword id="KW-0812">Transmembrane</keyword>
<keyword id="KW-1133">Transmembrane helix</keyword>
<comment type="function">
    <text evidence="1">Transmembrane component of the tectonic-like complex, a complex localized at the transition zone of primary cilia and acting as a barrier that prevents diffusion of transmembrane proteins between the cilia and plasma membranes. Required for ciliogenesis and sonic hedgehog/SHH signaling (By similarity).</text>
</comment>
<comment type="subunit">
    <text evidence="1">Part of the tectonic-like complex (also named B9 complex).</text>
</comment>
<comment type="subcellular location">
    <subcellularLocation>
        <location evidence="1">Cell projection</location>
        <location evidence="1">Cilium membrane</location>
        <topology evidence="1">Multi-pass membrane protein</topology>
    </subcellularLocation>
    <text evidence="1">Localizes to the transition zone of primary cilia; SEPT2 is required for localization to the transition zone.</text>
</comment>
<comment type="similarity">
    <text evidence="3">Belongs to the TMEM231 family.</text>
</comment>
<dbReference type="EMBL" id="AAMC01039122">
    <property type="status" value="NOT_ANNOTATED_CDS"/>
    <property type="molecule type" value="Genomic_DNA"/>
</dbReference>
<dbReference type="EMBL" id="BC158962">
    <property type="protein sequence ID" value="AAI58963.1"/>
    <property type="molecule type" value="mRNA"/>
</dbReference>
<dbReference type="RefSeq" id="NP_001120108.1">
    <property type="nucleotide sequence ID" value="NM_001126636.1"/>
</dbReference>
<dbReference type="FunCoup" id="F7B645">
    <property type="interactions" value="353"/>
</dbReference>
<dbReference type="STRING" id="8364.ENSXETP00000043353"/>
<dbReference type="GlyCosmos" id="F7B645">
    <property type="glycosylation" value="2 sites, No reported glycans"/>
</dbReference>
<dbReference type="PaxDb" id="8364-ENSXETP00000007717"/>
<dbReference type="GeneID" id="100145127"/>
<dbReference type="KEGG" id="xtr:100145127"/>
<dbReference type="CTD" id="79583"/>
<dbReference type="eggNOG" id="KOG4838">
    <property type="taxonomic scope" value="Eukaryota"/>
</dbReference>
<dbReference type="HOGENOM" id="CLU_070969_0_0_1"/>
<dbReference type="InParanoid" id="F7B645"/>
<dbReference type="OrthoDB" id="426438at2759"/>
<dbReference type="TreeFam" id="TF312969"/>
<dbReference type="Proteomes" id="UP000008143">
    <property type="component" value="Chromosome 4"/>
</dbReference>
<dbReference type="GO" id="GO:0060170">
    <property type="term" value="C:ciliary membrane"/>
    <property type="evidence" value="ECO:0000250"/>
    <property type="project" value="UniProtKB"/>
</dbReference>
<dbReference type="GO" id="GO:0035869">
    <property type="term" value="C:ciliary transition zone"/>
    <property type="evidence" value="ECO:0000250"/>
    <property type="project" value="UniProtKB"/>
</dbReference>
<dbReference type="GO" id="GO:0036038">
    <property type="term" value="C:MKS complex"/>
    <property type="evidence" value="ECO:0000250"/>
    <property type="project" value="UniProtKB"/>
</dbReference>
<dbReference type="GO" id="GO:0060271">
    <property type="term" value="P:cilium assembly"/>
    <property type="evidence" value="ECO:0000250"/>
    <property type="project" value="UniProtKB"/>
</dbReference>
<dbReference type="GO" id="GO:0007224">
    <property type="term" value="P:smoothened signaling pathway"/>
    <property type="evidence" value="ECO:0000250"/>
    <property type="project" value="UniProtKB"/>
</dbReference>
<dbReference type="InterPro" id="IPR019306">
    <property type="entry name" value="TMEM231"/>
</dbReference>
<dbReference type="PANTHER" id="PTHR14605">
    <property type="entry name" value="CHST5 PROTEIN"/>
    <property type="match status" value="1"/>
</dbReference>
<dbReference type="PANTHER" id="PTHR14605:SF1">
    <property type="entry name" value="TRANSMEMBRANE PROTEIN 231"/>
    <property type="match status" value="1"/>
</dbReference>
<dbReference type="Pfam" id="PF10149">
    <property type="entry name" value="TM231"/>
    <property type="match status" value="1"/>
</dbReference>
<protein>
    <recommendedName>
        <fullName>Transmembrane protein 231</fullName>
    </recommendedName>
</protein>